<feature type="chain" id="PRO_0000173672" description="Probable transaldolase 2">
    <location>
        <begin position="1"/>
        <end position="218"/>
    </location>
</feature>
<feature type="active site" description="Schiff-base intermediate with substrate" evidence="1">
    <location>
        <position position="83"/>
    </location>
</feature>
<comment type="function">
    <text evidence="1">Transaldolase is important for the balance of metabolites in the pentose-phosphate pathway.</text>
</comment>
<comment type="catalytic activity">
    <reaction evidence="1">
        <text>D-sedoheptulose 7-phosphate + D-glyceraldehyde 3-phosphate = D-erythrose 4-phosphate + beta-D-fructose 6-phosphate</text>
        <dbReference type="Rhea" id="RHEA:17053"/>
        <dbReference type="ChEBI" id="CHEBI:16897"/>
        <dbReference type="ChEBI" id="CHEBI:57483"/>
        <dbReference type="ChEBI" id="CHEBI:57634"/>
        <dbReference type="ChEBI" id="CHEBI:59776"/>
        <dbReference type="EC" id="2.2.1.2"/>
    </reaction>
</comment>
<comment type="pathway">
    <text evidence="1">Carbohydrate degradation; pentose phosphate pathway; D-glyceraldehyde 3-phosphate and beta-D-fructose 6-phosphate from D-ribose 5-phosphate and D-xylulose 5-phosphate (non-oxidative stage): step 2/3.</text>
</comment>
<comment type="subcellular location">
    <subcellularLocation>
        <location evidence="1">Cytoplasm</location>
    </subcellularLocation>
</comment>
<comment type="similarity">
    <text evidence="1">Belongs to the transaldolase family. Type 3B subfamily.</text>
</comment>
<keyword id="KW-0963">Cytoplasm</keyword>
<keyword id="KW-0570">Pentose shunt</keyword>
<keyword id="KW-0704">Schiff base</keyword>
<keyword id="KW-0808">Transferase</keyword>
<name>TAL2_LISIN</name>
<proteinExistence type="inferred from homology"/>
<reference key="1">
    <citation type="journal article" date="2001" name="Science">
        <title>Comparative genomics of Listeria species.</title>
        <authorList>
            <person name="Glaser P."/>
            <person name="Frangeul L."/>
            <person name="Buchrieser C."/>
            <person name="Rusniok C."/>
            <person name="Amend A."/>
            <person name="Baquero F."/>
            <person name="Berche P."/>
            <person name="Bloecker H."/>
            <person name="Brandt P."/>
            <person name="Chakraborty T."/>
            <person name="Charbit A."/>
            <person name="Chetouani F."/>
            <person name="Couve E."/>
            <person name="de Daruvar A."/>
            <person name="Dehoux P."/>
            <person name="Domann E."/>
            <person name="Dominguez-Bernal G."/>
            <person name="Duchaud E."/>
            <person name="Durant L."/>
            <person name="Dussurget O."/>
            <person name="Entian K.-D."/>
            <person name="Fsihi H."/>
            <person name="Garcia-del Portillo F."/>
            <person name="Garrido P."/>
            <person name="Gautier L."/>
            <person name="Goebel W."/>
            <person name="Gomez-Lopez N."/>
            <person name="Hain T."/>
            <person name="Hauf J."/>
            <person name="Jackson D."/>
            <person name="Jones L.-M."/>
            <person name="Kaerst U."/>
            <person name="Kreft J."/>
            <person name="Kuhn M."/>
            <person name="Kunst F."/>
            <person name="Kurapkat G."/>
            <person name="Madueno E."/>
            <person name="Maitournam A."/>
            <person name="Mata Vicente J."/>
            <person name="Ng E."/>
            <person name="Nedjari H."/>
            <person name="Nordsiek G."/>
            <person name="Novella S."/>
            <person name="de Pablos B."/>
            <person name="Perez-Diaz J.-C."/>
            <person name="Purcell R."/>
            <person name="Remmel B."/>
            <person name="Rose M."/>
            <person name="Schlueter T."/>
            <person name="Simoes N."/>
            <person name="Tierrez A."/>
            <person name="Vazquez-Boland J.-A."/>
            <person name="Voss H."/>
            <person name="Wehland J."/>
            <person name="Cossart P."/>
        </authorList>
    </citation>
    <scope>NUCLEOTIDE SEQUENCE [LARGE SCALE GENOMIC DNA]</scope>
    <source>
        <strain>ATCC BAA-680 / CLIP 11262</strain>
    </source>
</reference>
<protein>
    <recommendedName>
        <fullName evidence="1">Probable transaldolase 2</fullName>
        <ecNumber evidence="1">2.2.1.2</ecNumber>
    </recommendedName>
</protein>
<gene>
    <name evidence="1" type="primary">tal2</name>
    <name type="ordered locus">lin0361</name>
</gene>
<accession>P66958</accession>
<accession>Q92EU7</accession>
<evidence type="ECO:0000255" key="1">
    <source>
        <dbReference type="HAMAP-Rule" id="MF_00494"/>
    </source>
</evidence>
<dbReference type="EC" id="2.2.1.2" evidence="1"/>
<dbReference type="EMBL" id="AL596164">
    <property type="protein sequence ID" value="CAC95594.1"/>
    <property type="molecule type" value="Genomic_DNA"/>
</dbReference>
<dbReference type="PIR" id="AB1478">
    <property type="entry name" value="AB1478"/>
</dbReference>
<dbReference type="SMR" id="P66958"/>
<dbReference type="STRING" id="272626.gene:17564688"/>
<dbReference type="KEGG" id="lin:lin0361"/>
<dbReference type="eggNOG" id="COG0176">
    <property type="taxonomic scope" value="Bacteria"/>
</dbReference>
<dbReference type="HOGENOM" id="CLU_079764_0_0_9"/>
<dbReference type="OrthoDB" id="9807051at2"/>
<dbReference type="UniPathway" id="UPA00115">
    <property type="reaction ID" value="UER00414"/>
</dbReference>
<dbReference type="Proteomes" id="UP000002513">
    <property type="component" value="Chromosome"/>
</dbReference>
<dbReference type="GO" id="GO:0005737">
    <property type="term" value="C:cytoplasm"/>
    <property type="evidence" value="ECO:0007669"/>
    <property type="project" value="UniProtKB-SubCell"/>
</dbReference>
<dbReference type="GO" id="GO:0016832">
    <property type="term" value="F:aldehyde-lyase activity"/>
    <property type="evidence" value="ECO:0007669"/>
    <property type="project" value="InterPro"/>
</dbReference>
<dbReference type="GO" id="GO:0004801">
    <property type="term" value="F:transaldolase activity"/>
    <property type="evidence" value="ECO:0007669"/>
    <property type="project" value="UniProtKB-UniRule"/>
</dbReference>
<dbReference type="GO" id="GO:0005975">
    <property type="term" value="P:carbohydrate metabolic process"/>
    <property type="evidence" value="ECO:0007669"/>
    <property type="project" value="InterPro"/>
</dbReference>
<dbReference type="GO" id="GO:0006098">
    <property type="term" value="P:pentose-phosphate shunt"/>
    <property type="evidence" value="ECO:0007669"/>
    <property type="project" value="UniProtKB-UniRule"/>
</dbReference>
<dbReference type="CDD" id="cd00956">
    <property type="entry name" value="Transaldolase_FSA"/>
    <property type="match status" value="1"/>
</dbReference>
<dbReference type="FunFam" id="3.20.20.70:FF:000018">
    <property type="entry name" value="Probable transaldolase"/>
    <property type="match status" value="1"/>
</dbReference>
<dbReference type="Gene3D" id="3.20.20.70">
    <property type="entry name" value="Aldolase class I"/>
    <property type="match status" value="1"/>
</dbReference>
<dbReference type="HAMAP" id="MF_00494">
    <property type="entry name" value="Transaldolase_3b"/>
    <property type="match status" value="1"/>
</dbReference>
<dbReference type="InterPro" id="IPR013785">
    <property type="entry name" value="Aldolase_TIM"/>
</dbReference>
<dbReference type="InterPro" id="IPR001585">
    <property type="entry name" value="TAL/FSA"/>
</dbReference>
<dbReference type="InterPro" id="IPR022999">
    <property type="entry name" value="Transaldolase_3B"/>
</dbReference>
<dbReference type="InterPro" id="IPR004731">
    <property type="entry name" value="Transaldolase_3B/F6P_aldolase"/>
</dbReference>
<dbReference type="InterPro" id="IPR018225">
    <property type="entry name" value="Transaldolase_AS"/>
</dbReference>
<dbReference type="InterPro" id="IPR033919">
    <property type="entry name" value="TSA/FSA_arc/bac"/>
</dbReference>
<dbReference type="NCBIfam" id="TIGR00875">
    <property type="entry name" value="fsa_talC_mipB"/>
    <property type="match status" value="1"/>
</dbReference>
<dbReference type="PANTHER" id="PTHR10683">
    <property type="entry name" value="TRANSALDOLASE"/>
    <property type="match status" value="1"/>
</dbReference>
<dbReference type="PANTHER" id="PTHR10683:SF36">
    <property type="entry name" value="TRANSALDOLASE"/>
    <property type="match status" value="1"/>
</dbReference>
<dbReference type="Pfam" id="PF00923">
    <property type="entry name" value="TAL_FSA"/>
    <property type="match status" value="1"/>
</dbReference>
<dbReference type="SUPFAM" id="SSF51569">
    <property type="entry name" value="Aldolase"/>
    <property type="match status" value="1"/>
</dbReference>
<dbReference type="PROSITE" id="PS01054">
    <property type="entry name" value="TRANSALDOLASE_1"/>
    <property type="match status" value="1"/>
</dbReference>
<dbReference type="PROSITE" id="PS00958">
    <property type="entry name" value="TRANSALDOLASE_2"/>
    <property type="match status" value="1"/>
</dbReference>
<sequence length="218" mass="23551">MKFFLDTASVSEIKRISELGLVDGVTTNPTIIAKEGRPFEEVIKEICSIVDGPVSAEVIGLEADKMVEEARILAKWAPNVVVKIPMTEEGLKAVHTLTAEGIKTNVTLIFTVSQGLMAAKAGATYISPFLGRLDDIGTDGMILIKNLKKVLDNYGLKAEIISASIRHIGHLEEAAEAGAHIATIPGSLFPKLWSHPLTDKGIEGFLKDWEAFSQKEGN</sequence>
<organism>
    <name type="scientific">Listeria innocua serovar 6a (strain ATCC BAA-680 / CLIP 11262)</name>
    <dbReference type="NCBI Taxonomy" id="272626"/>
    <lineage>
        <taxon>Bacteria</taxon>
        <taxon>Bacillati</taxon>
        <taxon>Bacillota</taxon>
        <taxon>Bacilli</taxon>
        <taxon>Bacillales</taxon>
        <taxon>Listeriaceae</taxon>
        <taxon>Listeria</taxon>
    </lineage>
</organism>